<proteinExistence type="inferred from homology"/>
<name>SYL_BRUME</name>
<evidence type="ECO:0000255" key="1">
    <source>
        <dbReference type="HAMAP-Rule" id="MF_00049"/>
    </source>
</evidence>
<protein>
    <recommendedName>
        <fullName evidence="1">Leucine--tRNA ligase</fullName>
        <ecNumber evidence="1">6.1.1.4</ecNumber>
    </recommendedName>
    <alternativeName>
        <fullName evidence="1">Leucyl-tRNA synthetase</fullName>
        <shortName evidence="1">LeuRS</shortName>
    </alternativeName>
</protein>
<comment type="catalytic activity">
    <reaction evidence="1">
        <text>tRNA(Leu) + L-leucine + ATP = L-leucyl-tRNA(Leu) + AMP + diphosphate</text>
        <dbReference type="Rhea" id="RHEA:11688"/>
        <dbReference type="Rhea" id="RHEA-COMP:9613"/>
        <dbReference type="Rhea" id="RHEA-COMP:9622"/>
        <dbReference type="ChEBI" id="CHEBI:30616"/>
        <dbReference type="ChEBI" id="CHEBI:33019"/>
        <dbReference type="ChEBI" id="CHEBI:57427"/>
        <dbReference type="ChEBI" id="CHEBI:78442"/>
        <dbReference type="ChEBI" id="CHEBI:78494"/>
        <dbReference type="ChEBI" id="CHEBI:456215"/>
        <dbReference type="EC" id="6.1.1.4"/>
    </reaction>
</comment>
<comment type="subcellular location">
    <subcellularLocation>
        <location evidence="1">Cytoplasm</location>
    </subcellularLocation>
</comment>
<comment type="similarity">
    <text evidence="1">Belongs to the class-I aminoacyl-tRNA synthetase family.</text>
</comment>
<dbReference type="EC" id="6.1.1.4" evidence="1"/>
<dbReference type="EMBL" id="AE008917">
    <property type="protein sequence ID" value="AAL51424.1"/>
    <property type="molecule type" value="Genomic_DNA"/>
</dbReference>
<dbReference type="PIR" id="AE3282">
    <property type="entry name" value="AE3282"/>
</dbReference>
<dbReference type="RefSeq" id="WP_002967933.1">
    <property type="nucleotide sequence ID" value="NZ_GG703781.1"/>
</dbReference>
<dbReference type="SMR" id="Q8YJ44"/>
<dbReference type="GeneID" id="97533068"/>
<dbReference type="KEGG" id="bme:BMEI0242"/>
<dbReference type="KEGG" id="bmel:DK63_1189"/>
<dbReference type="PATRIC" id="fig|224914.52.peg.1256"/>
<dbReference type="eggNOG" id="COG0495">
    <property type="taxonomic scope" value="Bacteria"/>
</dbReference>
<dbReference type="PhylomeDB" id="Q8YJ44"/>
<dbReference type="Proteomes" id="UP000000419">
    <property type="component" value="Chromosome I"/>
</dbReference>
<dbReference type="GO" id="GO:0005829">
    <property type="term" value="C:cytosol"/>
    <property type="evidence" value="ECO:0007669"/>
    <property type="project" value="TreeGrafter"/>
</dbReference>
<dbReference type="GO" id="GO:0002161">
    <property type="term" value="F:aminoacyl-tRNA deacylase activity"/>
    <property type="evidence" value="ECO:0007669"/>
    <property type="project" value="InterPro"/>
</dbReference>
<dbReference type="GO" id="GO:0005524">
    <property type="term" value="F:ATP binding"/>
    <property type="evidence" value="ECO:0007669"/>
    <property type="project" value="UniProtKB-UniRule"/>
</dbReference>
<dbReference type="GO" id="GO:0004823">
    <property type="term" value="F:leucine-tRNA ligase activity"/>
    <property type="evidence" value="ECO:0007669"/>
    <property type="project" value="UniProtKB-UniRule"/>
</dbReference>
<dbReference type="GO" id="GO:0006429">
    <property type="term" value="P:leucyl-tRNA aminoacylation"/>
    <property type="evidence" value="ECO:0007669"/>
    <property type="project" value="UniProtKB-UniRule"/>
</dbReference>
<dbReference type="CDD" id="cd07958">
    <property type="entry name" value="Anticodon_Ia_Leu_BEm"/>
    <property type="match status" value="1"/>
</dbReference>
<dbReference type="CDD" id="cd00812">
    <property type="entry name" value="LeuRS_core"/>
    <property type="match status" value="1"/>
</dbReference>
<dbReference type="FunFam" id="1.10.730.10:FF:000002">
    <property type="entry name" value="Leucine--tRNA ligase"/>
    <property type="match status" value="1"/>
</dbReference>
<dbReference type="FunFam" id="3.40.50.620:FF:000003">
    <property type="entry name" value="Leucine--tRNA ligase"/>
    <property type="match status" value="1"/>
</dbReference>
<dbReference type="Gene3D" id="2.20.28.290">
    <property type="match status" value="1"/>
</dbReference>
<dbReference type="Gene3D" id="3.10.20.590">
    <property type="match status" value="1"/>
</dbReference>
<dbReference type="Gene3D" id="3.40.50.620">
    <property type="entry name" value="HUPs"/>
    <property type="match status" value="2"/>
</dbReference>
<dbReference type="Gene3D" id="1.10.730.10">
    <property type="entry name" value="Isoleucyl-tRNA Synthetase, Domain 1"/>
    <property type="match status" value="1"/>
</dbReference>
<dbReference type="Gene3D" id="3.90.740.10">
    <property type="entry name" value="Valyl/Leucyl/Isoleucyl-tRNA synthetase, editing domain"/>
    <property type="match status" value="1"/>
</dbReference>
<dbReference type="HAMAP" id="MF_00049_B">
    <property type="entry name" value="Leu_tRNA_synth_B"/>
    <property type="match status" value="1"/>
</dbReference>
<dbReference type="InterPro" id="IPR001412">
    <property type="entry name" value="aa-tRNA-synth_I_CS"/>
</dbReference>
<dbReference type="InterPro" id="IPR002300">
    <property type="entry name" value="aa-tRNA-synth_Ia"/>
</dbReference>
<dbReference type="InterPro" id="IPR002302">
    <property type="entry name" value="Leu-tRNA-ligase"/>
</dbReference>
<dbReference type="InterPro" id="IPR025709">
    <property type="entry name" value="Leu_tRNA-synth_edit"/>
</dbReference>
<dbReference type="InterPro" id="IPR013155">
    <property type="entry name" value="M/V/L/I-tRNA-synth_anticd-bd"/>
</dbReference>
<dbReference type="InterPro" id="IPR015413">
    <property type="entry name" value="Methionyl/Leucyl_tRNA_Synth"/>
</dbReference>
<dbReference type="InterPro" id="IPR014729">
    <property type="entry name" value="Rossmann-like_a/b/a_fold"/>
</dbReference>
<dbReference type="InterPro" id="IPR009080">
    <property type="entry name" value="tRNAsynth_Ia_anticodon-bd"/>
</dbReference>
<dbReference type="InterPro" id="IPR009008">
    <property type="entry name" value="Val/Leu/Ile-tRNA-synth_edit"/>
</dbReference>
<dbReference type="NCBIfam" id="TIGR00396">
    <property type="entry name" value="leuS_bact"/>
    <property type="match status" value="1"/>
</dbReference>
<dbReference type="PANTHER" id="PTHR43740:SF2">
    <property type="entry name" value="LEUCINE--TRNA LIGASE, MITOCHONDRIAL"/>
    <property type="match status" value="1"/>
</dbReference>
<dbReference type="PANTHER" id="PTHR43740">
    <property type="entry name" value="LEUCYL-TRNA SYNTHETASE"/>
    <property type="match status" value="1"/>
</dbReference>
<dbReference type="Pfam" id="PF08264">
    <property type="entry name" value="Anticodon_1"/>
    <property type="match status" value="1"/>
</dbReference>
<dbReference type="Pfam" id="PF00133">
    <property type="entry name" value="tRNA-synt_1"/>
    <property type="match status" value="2"/>
</dbReference>
<dbReference type="Pfam" id="PF13603">
    <property type="entry name" value="tRNA-synt_1_2"/>
    <property type="match status" value="1"/>
</dbReference>
<dbReference type="Pfam" id="PF09334">
    <property type="entry name" value="tRNA-synt_1g"/>
    <property type="match status" value="1"/>
</dbReference>
<dbReference type="PRINTS" id="PR00985">
    <property type="entry name" value="TRNASYNTHLEU"/>
</dbReference>
<dbReference type="SUPFAM" id="SSF47323">
    <property type="entry name" value="Anticodon-binding domain of a subclass of class I aminoacyl-tRNA synthetases"/>
    <property type="match status" value="1"/>
</dbReference>
<dbReference type="SUPFAM" id="SSF52374">
    <property type="entry name" value="Nucleotidylyl transferase"/>
    <property type="match status" value="1"/>
</dbReference>
<dbReference type="SUPFAM" id="SSF50677">
    <property type="entry name" value="ValRS/IleRS/LeuRS editing domain"/>
    <property type="match status" value="1"/>
</dbReference>
<dbReference type="PROSITE" id="PS00178">
    <property type="entry name" value="AA_TRNA_LIGASE_I"/>
    <property type="match status" value="1"/>
</dbReference>
<sequence length="877" mass="97863">MAAERYNPRVAEAHWQKVWEENRTFETDNSDSREKYYVLEMFPYPSGRIHMGHVRNYAMGDVVARYKRAKGFNVLHPMGWDAFGMPAENAAMQNKVHPKEWTYQNIATMKRQLKSMGLSLDWSREFATCDVEYYHRQQMLFIDLYEKGLVTRKTSKVNWDPVDNTVLANEQVVDGRGWRSGALVEQRELTQWFFKITDFSEELLAGLDTLDQWPEKVRLMQRNWIGKSEGLQVRFALAAGTAPAGFSEVEVYTTRPDTLFGAAFVAISADHPLAKKLSEGNAALSSFIEECHQQGTSLAALETAEKKGFDTGIKVKHPFDDNWELPVYVANFVLMEYGTGAVFGCPAHDQRDLDFANKYKLKVTPVVLPKGEDAASFSIGETAYTDDGVMINSRFLDGMTPEAAFNEVASRLEKTDLVGRPQAVRKVQFRLRDWGISRQRYWGCPIPMIHCESCGVNPVPRADLPVKLPDDVEFDRPGNPLDRHATWRHVKCPKCGGDARRETDTMDTFVDSSWYYTRFTAPWENEPTDRKAADHWLPVDQYIGGIEHAILHLLYSRFFTRAMKVAGHVGVDEPFKGLFTQGMVVHETYKANGQWVSPADIRIEEIDGKRVATMLDSGAPVEIGSIEKMSKSKKNVVDPDDIIASYGADTARWFVLSDSPPERDVIWTEAGAEGAHRFVQRIWRLVAEAAPALKDVAPKAGTQGEALGVSKAAHKAVKAVGDDIEKLAFNRGVARLYELVNTLSGALQQAADGKADAEMKGALREATEMLVLMTAPMMPHLAEQCLAELGGKVAGKETLVARAPWPVFDPALVVENEIVLPVQINGKKRGDLTIARDADQASIQQAVLELDFVKAALNGGSPKKIIVVPQRIVNVVA</sequence>
<reference key="1">
    <citation type="journal article" date="2002" name="Proc. Natl. Acad. Sci. U.S.A.">
        <title>The genome sequence of the facultative intracellular pathogen Brucella melitensis.</title>
        <authorList>
            <person name="DelVecchio V.G."/>
            <person name="Kapatral V."/>
            <person name="Redkar R.J."/>
            <person name="Patra G."/>
            <person name="Mujer C."/>
            <person name="Los T."/>
            <person name="Ivanova N."/>
            <person name="Anderson I."/>
            <person name="Bhattacharyya A."/>
            <person name="Lykidis A."/>
            <person name="Reznik G."/>
            <person name="Jablonski L."/>
            <person name="Larsen N."/>
            <person name="D'Souza M."/>
            <person name="Bernal A."/>
            <person name="Mazur M."/>
            <person name="Goltsman E."/>
            <person name="Selkov E."/>
            <person name="Elzer P.H."/>
            <person name="Hagius S."/>
            <person name="O'Callaghan D."/>
            <person name="Letesson J.-J."/>
            <person name="Haselkorn R."/>
            <person name="Kyrpides N.C."/>
            <person name="Overbeek R."/>
        </authorList>
    </citation>
    <scope>NUCLEOTIDE SEQUENCE [LARGE SCALE GENOMIC DNA]</scope>
    <source>
        <strain>ATCC 23456 / CCUG 17765 / NCTC 10094 / 16M</strain>
    </source>
</reference>
<organism>
    <name type="scientific">Brucella melitensis biotype 1 (strain ATCC 23456 / CCUG 17765 / NCTC 10094 / 16M)</name>
    <dbReference type="NCBI Taxonomy" id="224914"/>
    <lineage>
        <taxon>Bacteria</taxon>
        <taxon>Pseudomonadati</taxon>
        <taxon>Pseudomonadota</taxon>
        <taxon>Alphaproteobacteria</taxon>
        <taxon>Hyphomicrobiales</taxon>
        <taxon>Brucellaceae</taxon>
        <taxon>Brucella/Ochrobactrum group</taxon>
        <taxon>Brucella</taxon>
    </lineage>
</organism>
<accession>Q8YJ44</accession>
<gene>
    <name evidence="1" type="primary">leuS</name>
    <name type="ordered locus">BMEI0242</name>
</gene>
<keyword id="KW-0030">Aminoacyl-tRNA synthetase</keyword>
<keyword id="KW-0067">ATP-binding</keyword>
<keyword id="KW-0963">Cytoplasm</keyword>
<keyword id="KW-0436">Ligase</keyword>
<keyword id="KW-0547">Nucleotide-binding</keyword>
<keyword id="KW-0648">Protein biosynthesis</keyword>
<feature type="chain" id="PRO_0000151985" description="Leucine--tRNA ligase">
    <location>
        <begin position="1"/>
        <end position="877"/>
    </location>
</feature>
<feature type="short sequence motif" description="'HIGH' region">
    <location>
        <begin position="43"/>
        <end position="53"/>
    </location>
</feature>
<feature type="short sequence motif" description="'KMSKS' region">
    <location>
        <begin position="628"/>
        <end position="632"/>
    </location>
</feature>
<feature type="binding site" evidence="1">
    <location>
        <position position="631"/>
    </location>
    <ligand>
        <name>ATP</name>
        <dbReference type="ChEBI" id="CHEBI:30616"/>
    </ligand>
</feature>